<accession>P00350</accession>
<accession>P78080</accession>
<accession>Q47571</accession>
<accession>Q59366</accession>
<accession>Q59402</accession>
<accession>Q59411</accession>
<accession>Q59412</accession>
<accession>Q59413</accession>
<accession>Q59414</accession>
<accession>Q59416</accession>
<accession>Q79DT3</accession>
<organism>
    <name type="scientific">Escherichia coli (strain K12)</name>
    <dbReference type="NCBI Taxonomy" id="83333"/>
    <lineage>
        <taxon>Bacteria</taxon>
        <taxon>Pseudomonadati</taxon>
        <taxon>Pseudomonadota</taxon>
        <taxon>Gammaproteobacteria</taxon>
        <taxon>Enterobacterales</taxon>
        <taxon>Enterobacteriaceae</taxon>
        <taxon>Escherichia</taxon>
    </lineage>
</organism>
<dbReference type="EC" id="1.1.1.44"/>
<dbReference type="EMBL" id="K02072">
    <property type="protein sequence ID" value="AAA23918.1"/>
    <property type="molecule type" value="Genomic_DNA"/>
</dbReference>
<dbReference type="EMBL" id="M63821">
    <property type="protein sequence ID" value="AAA24488.1"/>
    <property type="molecule type" value="Genomic_DNA"/>
</dbReference>
<dbReference type="EMBL" id="M64326">
    <property type="protein sequence ID" value="AAA24204.1"/>
    <property type="molecule type" value="Genomic_DNA"/>
</dbReference>
<dbReference type="EMBL" id="M64327">
    <property type="protein sequence ID" value="AAA24205.1"/>
    <property type="molecule type" value="Genomic_DNA"/>
</dbReference>
<dbReference type="EMBL" id="M64328">
    <property type="protein sequence ID" value="AAA24206.1"/>
    <property type="molecule type" value="Genomic_DNA"/>
</dbReference>
<dbReference type="EMBL" id="M64329">
    <property type="protein sequence ID" value="AAA24207.1"/>
    <property type="molecule type" value="Genomic_DNA"/>
</dbReference>
<dbReference type="EMBL" id="M64330">
    <property type="protein sequence ID" value="AAA24208.1"/>
    <property type="molecule type" value="Genomic_DNA"/>
</dbReference>
<dbReference type="EMBL" id="M64331">
    <property type="protein sequence ID" value="AAA24209.1"/>
    <property type="molecule type" value="Genomic_DNA"/>
</dbReference>
<dbReference type="EMBL" id="U00096">
    <property type="protein sequence ID" value="AAC75090.1"/>
    <property type="molecule type" value="Genomic_DNA"/>
</dbReference>
<dbReference type="EMBL" id="AP009048">
    <property type="protein sequence ID" value="BAA15869.1"/>
    <property type="molecule type" value="Genomic_DNA"/>
</dbReference>
<dbReference type="EMBL" id="M23181">
    <property type="protein sequence ID" value="AAA23924.1"/>
    <property type="molecule type" value="Genomic_DNA"/>
</dbReference>
<dbReference type="EMBL" id="M18956">
    <property type="protein sequence ID" value="AAA23919.1"/>
    <property type="molecule type" value="Genomic_DNA"/>
</dbReference>
<dbReference type="EMBL" id="M18957">
    <property type="protein sequence ID" value="AAA23920.1"/>
    <property type="molecule type" value="Genomic_DNA"/>
</dbReference>
<dbReference type="EMBL" id="M18960">
    <property type="protein sequence ID" value="AAA23922.1"/>
    <property type="molecule type" value="Genomic_DNA"/>
</dbReference>
<dbReference type="EMBL" id="AF125322">
    <property type="protein sequence ID" value="AAC27540.1"/>
    <property type="molecule type" value="Genomic_DNA"/>
</dbReference>
<dbReference type="PIR" id="D64968">
    <property type="entry name" value="DEECGC"/>
</dbReference>
<dbReference type="PIR" id="I62463">
    <property type="entry name" value="I62463"/>
</dbReference>
<dbReference type="PIR" id="I62465">
    <property type="entry name" value="I62465"/>
</dbReference>
<dbReference type="RefSeq" id="NP_416533.1">
    <property type="nucleotide sequence ID" value="NC_000913.3"/>
</dbReference>
<dbReference type="PDB" id="2ZYA">
    <property type="method" value="X-ray"/>
    <property type="resolution" value="1.60 A"/>
    <property type="chains" value="A/B=1-468"/>
</dbReference>
<dbReference type="PDB" id="2ZYD">
    <property type="method" value="X-ray"/>
    <property type="resolution" value="1.50 A"/>
    <property type="chains" value="A/B=1-468"/>
</dbReference>
<dbReference type="PDB" id="3FWN">
    <property type="method" value="X-ray"/>
    <property type="resolution" value="1.50 A"/>
    <property type="chains" value="A/B=1-468"/>
</dbReference>
<dbReference type="PDBsum" id="2ZYA"/>
<dbReference type="PDBsum" id="2ZYD"/>
<dbReference type="PDBsum" id="3FWN"/>
<dbReference type="SMR" id="P00350"/>
<dbReference type="BioGRID" id="4261354">
    <property type="interactions" value="24"/>
</dbReference>
<dbReference type="BioGRID" id="850901">
    <property type="interactions" value="1"/>
</dbReference>
<dbReference type="DIP" id="DIP-9819N"/>
<dbReference type="FunCoup" id="P00350">
    <property type="interactions" value="756"/>
</dbReference>
<dbReference type="IntAct" id="P00350">
    <property type="interactions" value="6"/>
</dbReference>
<dbReference type="STRING" id="511145.b2029"/>
<dbReference type="jPOST" id="P00350"/>
<dbReference type="PaxDb" id="511145-b2029"/>
<dbReference type="EnsemblBacteria" id="AAC75090">
    <property type="protein sequence ID" value="AAC75090"/>
    <property type="gene ID" value="b2029"/>
</dbReference>
<dbReference type="GeneID" id="946554"/>
<dbReference type="KEGG" id="ecj:JW2011"/>
<dbReference type="KEGG" id="eco:b2029"/>
<dbReference type="KEGG" id="ecoc:C3026_11435"/>
<dbReference type="PATRIC" id="fig|1411691.4.peg.223"/>
<dbReference type="EchoBASE" id="EB0406"/>
<dbReference type="eggNOG" id="COG0362">
    <property type="taxonomic scope" value="Bacteria"/>
</dbReference>
<dbReference type="HOGENOM" id="CLU_024540_4_2_6"/>
<dbReference type="InParanoid" id="P00350"/>
<dbReference type="OMA" id="CVTHVGP"/>
<dbReference type="OrthoDB" id="9804542at2"/>
<dbReference type="PhylomeDB" id="P00350"/>
<dbReference type="BioCyc" id="EcoCyc:6PGLUCONDEHYDROG-MONOMER"/>
<dbReference type="BioCyc" id="MetaCyc:6PGLUCONDEHYDROG-MONOMER"/>
<dbReference type="BRENDA" id="1.1.1.44">
    <property type="organism ID" value="2026"/>
</dbReference>
<dbReference type="SABIO-RK" id="P00350"/>
<dbReference type="UniPathway" id="UPA00115">
    <property type="reaction ID" value="UER00410"/>
</dbReference>
<dbReference type="EvolutionaryTrace" id="P00350"/>
<dbReference type="PRO" id="PR:P00350"/>
<dbReference type="Proteomes" id="UP000000625">
    <property type="component" value="Chromosome"/>
</dbReference>
<dbReference type="GO" id="GO:0005829">
    <property type="term" value="C:cytosol"/>
    <property type="evidence" value="ECO:0000314"/>
    <property type="project" value="EcoCyc"/>
</dbReference>
<dbReference type="GO" id="GO:0097216">
    <property type="term" value="F:guanosine tetraphosphate binding"/>
    <property type="evidence" value="ECO:0000314"/>
    <property type="project" value="EcoCyc"/>
</dbReference>
<dbReference type="GO" id="GO:0042802">
    <property type="term" value="F:identical protein binding"/>
    <property type="evidence" value="ECO:0000353"/>
    <property type="project" value="IntAct"/>
</dbReference>
<dbReference type="GO" id="GO:0050661">
    <property type="term" value="F:NADP binding"/>
    <property type="evidence" value="ECO:0000318"/>
    <property type="project" value="GO_Central"/>
</dbReference>
<dbReference type="GO" id="GO:0004616">
    <property type="term" value="F:phosphogluconate dehydrogenase (decarboxylating) activity"/>
    <property type="evidence" value="ECO:0000314"/>
    <property type="project" value="UniProtKB"/>
</dbReference>
<dbReference type="GO" id="GO:0042803">
    <property type="term" value="F:protein homodimerization activity"/>
    <property type="evidence" value="ECO:0000314"/>
    <property type="project" value="EcoCyc"/>
</dbReference>
<dbReference type="GO" id="GO:0019521">
    <property type="term" value="P:D-gluconate metabolic process"/>
    <property type="evidence" value="ECO:0007669"/>
    <property type="project" value="UniProtKB-KW"/>
</dbReference>
<dbReference type="GO" id="GO:0016054">
    <property type="term" value="P:organic acid catabolic process"/>
    <property type="evidence" value="ECO:0007669"/>
    <property type="project" value="UniProtKB-ARBA"/>
</dbReference>
<dbReference type="GO" id="GO:0006098">
    <property type="term" value="P:pentose-phosphate shunt"/>
    <property type="evidence" value="ECO:0000314"/>
    <property type="project" value="UniProtKB"/>
</dbReference>
<dbReference type="GO" id="GO:0009051">
    <property type="term" value="P:pentose-phosphate shunt, oxidative branch"/>
    <property type="evidence" value="ECO:0000318"/>
    <property type="project" value="GO_Central"/>
</dbReference>
<dbReference type="FunFam" id="1.10.1040.10:FF:000002">
    <property type="entry name" value="6-phosphogluconate dehydrogenase, decarboxylating"/>
    <property type="match status" value="1"/>
</dbReference>
<dbReference type="FunFam" id="1.20.5.320:FF:000001">
    <property type="entry name" value="6-phosphogluconate dehydrogenase, decarboxylating"/>
    <property type="match status" value="1"/>
</dbReference>
<dbReference type="FunFam" id="3.40.50.720:FF:000007">
    <property type="entry name" value="6-phosphogluconate dehydrogenase, decarboxylating"/>
    <property type="match status" value="1"/>
</dbReference>
<dbReference type="Gene3D" id="1.20.5.320">
    <property type="entry name" value="6-Phosphogluconate Dehydrogenase, domain 3"/>
    <property type="match status" value="1"/>
</dbReference>
<dbReference type="Gene3D" id="1.10.1040.10">
    <property type="entry name" value="N-(1-d-carboxylethyl)-l-norvaline Dehydrogenase, domain 2"/>
    <property type="match status" value="1"/>
</dbReference>
<dbReference type="Gene3D" id="3.40.50.720">
    <property type="entry name" value="NAD(P)-binding Rossmann-like Domain"/>
    <property type="match status" value="1"/>
</dbReference>
<dbReference type="InterPro" id="IPR008927">
    <property type="entry name" value="6-PGluconate_DH-like_C_sf"/>
</dbReference>
<dbReference type="InterPro" id="IPR013328">
    <property type="entry name" value="6PGD_dom2"/>
</dbReference>
<dbReference type="InterPro" id="IPR006114">
    <property type="entry name" value="6PGDH_C"/>
</dbReference>
<dbReference type="InterPro" id="IPR006113">
    <property type="entry name" value="6PGDH_Gnd/GntZ"/>
</dbReference>
<dbReference type="InterPro" id="IPR006115">
    <property type="entry name" value="6PGDH_NADP-bd"/>
</dbReference>
<dbReference type="InterPro" id="IPR006184">
    <property type="entry name" value="6PGdom_BS"/>
</dbReference>
<dbReference type="InterPro" id="IPR036291">
    <property type="entry name" value="NAD(P)-bd_dom_sf"/>
</dbReference>
<dbReference type="InterPro" id="IPR006183">
    <property type="entry name" value="Pgluconate_DH"/>
</dbReference>
<dbReference type="NCBIfam" id="TIGR00873">
    <property type="entry name" value="gnd"/>
    <property type="match status" value="1"/>
</dbReference>
<dbReference type="NCBIfam" id="NF006765">
    <property type="entry name" value="PRK09287.1"/>
    <property type="match status" value="1"/>
</dbReference>
<dbReference type="PANTHER" id="PTHR11811">
    <property type="entry name" value="6-PHOSPHOGLUCONATE DEHYDROGENASE"/>
    <property type="match status" value="1"/>
</dbReference>
<dbReference type="Pfam" id="PF00393">
    <property type="entry name" value="6PGD"/>
    <property type="match status" value="1"/>
</dbReference>
<dbReference type="Pfam" id="PF03446">
    <property type="entry name" value="NAD_binding_2"/>
    <property type="match status" value="1"/>
</dbReference>
<dbReference type="PIRSF" id="PIRSF000109">
    <property type="entry name" value="6PGD"/>
    <property type="match status" value="1"/>
</dbReference>
<dbReference type="PRINTS" id="PR00076">
    <property type="entry name" value="6PGDHDRGNASE"/>
</dbReference>
<dbReference type="SMART" id="SM01350">
    <property type="entry name" value="6PGD"/>
    <property type="match status" value="1"/>
</dbReference>
<dbReference type="SUPFAM" id="SSF48179">
    <property type="entry name" value="6-phosphogluconate dehydrogenase C-terminal domain-like"/>
    <property type="match status" value="1"/>
</dbReference>
<dbReference type="SUPFAM" id="SSF51735">
    <property type="entry name" value="NAD(P)-binding Rossmann-fold domains"/>
    <property type="match status" value="1"/>
</dbReference>
<dbReference type="PROSITE" id="PS00461">
    <property type="entry name" value="6PGD"/>
    <property type="match status" value="1"/>
</dbReference>
<name>6PGD_ECOLI</name>
<gene>
    <name type="primary">gnd</name>
    <name type="ordered locus">b2029</name>
    <name type="ordered locus">JW2011</name>
</gene>
<evidence type="ECO:0000250" key="1"/>
<evidence type="ECO:0000269" key="2">
    <source>
    </source>
</evidence>
<evidence type="ECO:0000305" key="3"/>
<evidence type="ECO:0000305" key="4">
    <source>
    </source>
</evidence>
<evidence type="ECO:0007829" key="5">
    <source>
        <dbReference type="PDB" id="2ZYD"/>
    </source>
</evidence>
<evidence type="ECO:0007829" key="6">
    <source>
        <dbReference type="PDB" id="3FWN"/>
    </source>
</evidence>
<comment type="function">
    <text evidence="2">Catalyzes the oxidative decarboxylation of 6-phosphogluconate to ribulose 5-phosphate and CO(2), with concomitant reduction of NADP to NADPH.</text>
</comment>
<comment type="catalytic activity">
    <reaction evidence="2">
        <text>6-phospho-D-gluconate + NADP(+) = D-ribulose 5-phosphate + CO2 + NADPH</text>
        <dbReference type="Rhea" id="RHEA:10116"/>
        <dbReference type="ChEBI" id="CHEBI:16526"/>
        <dbReference type="ChEBI" id="CHEBI:57783"/>
        <dbReference type="ChEBI" id="CHEBI:58121"/>
        <dbReference type="ChEBI" id="CHEBI:58349"/>
        <dbReference type="ChEBI" id="CHEBI:58759"/>
        <dbReference type="EC" id="1.1.1.44"/>
    </reaction>
</comment>
<comment type="biophysicochemical properties">
    <kinetics>
        <KM evidence="2">49 uM for NADP</KM>
        <KM evidence="2">93 uM for 6-phospho-D-gluconate</KM>
    </kinetics>
</comment>
<comment type="pathway">
    <text evidence="4">Carbohydrate degradation; pentose phosphate pathway; D-ribulose 5-phosphate from D-glucose 6-phosphate (oxidative stage): step 3/3.</text>
</comment>
<comment type="subunit">
    <text evidence="2">Homodimer.</text>
</comment>
<comment type="interaction">
    <interactant intactId="EBI-907049">
        <id>P00350</id>
    </interactant>
    <interactant intactId="EBI-907049">
        <id>P00350</id>
        <label>gnd</label>
    </interactant>
    <organismsDiffer>false</organismsDiffer>
    <experiments>4</experiments>
</comment>
<comment type="similarity">
    <text evidence="3">Belongs to the 6-phosphogluconate dehydrogenase family.</text>
</comment>
<protein>
    <recommendedName>
        <fullName>6-phosphogluconate dehydrogenase, decarboxylating</fullName>
        <ecNumber>1.1.1.44</ecNumber>
    </recommendedName>
</protein>
<reference key="1">
    <citation type="journal article" date="1984" name="Gene">
        <title>DNA sequence of the Escherichia coli gene, gnd, for 6-phosphogluconate dehydrogenase.</title>
        <authorList>
            <person name="Nasoff M.S."/>
            <person name="Baker H.V. II"/>
            <person name="Wolf R.E. Jr."/>
        </authorList>
    </citation>
    <scope>NUCLEOTIDE SEQUENCE [GENOMIC DNA]</scope>
</reference>
<reference key="2">
    <citation type="journal article" date="1991" name="J. Bacteriol.">
        <title>Nucleotide sequences of the gnd genes from nine natural isolates of Escherichia coli: evidence of intragenic recombination as a contributing factor in the evolution of the polymorphic gnd locus.</title>
        <authorList>
            <person name="Bisercic M."/>
            <person name="Feutrier J.Y."/>
            <person name="Reeves P.R."/>
        </authorList>
    </citation>
    <scope>NUCLEOTIDE SEQUENCE [GENOMIC DNA]</scope>
    <source>
        <strain>ECOR 10</strain>
    </source>
</reference>
<reference key="3">
    <citation type="journal article" date="1991" name="J. Bacteriol.">
        <title>Recombination in Escherichia coli and the definition of biological species.</title>
        <authorList>
            <person name="Dykhuizen D.E."/>
            <person name="Green L."/>
        </authorList>
    </citation>
    <scope>NUCLEOTIDE SEQUENCE [GENOMIC DNA]</scope>
    <source>
        <strain>ECOR 45</strain>
        <strain>ECOR 65</strain>
        <strain>ECOR 67</strain>
        <strain>ECOR 68</strain>
        <strain>ECOR 69</strain>
        <strain>ECOR 70</strain>
    </source>
</reference>
<reference key="4">
    <citation type="journal article" date="1996" name="DNA Res.">
        <title>A 460-kb DNA sequence of the Escherichia coli K-12 genome corresponding to the 40.1-50.0 min region on the linkage map.</title>
        <authorList>
            <person name="Itoh T."/>
            <person name="Aiba H."/>
            <person name="Baba T."/>
            <person name="Fujita K."/>
            <person name="Hayashi K."/>
            <person name="Inada T."/>
            <person name="Isono K."/>
            <person name="Kasai H."/>
            <person name="Kimura S."/>
            <person name="Kitakawa M."/>
            <person name="Kitagawa M."/>
            <person name="Makino K."/>
            <person name="Miki T."/>
            <person name="Mizobuchi K."/>
            <person name="Mori H."/>
            <person name="Mori T."/>
            <person name="Motomura K."/>
            <person name="Nakade S."/>
            <person name="Nakamura Y."/>
            <person name="Nashimoto H."/>
            <person name="Nishio Y."/>
            <person name="Oshima T."/>
            <person name="Saito N."/>
            <person name="Sampei G."/>
            <person name="Seki Y."/>
            <person name="Sivasundaram S."/>
            <person name="Tagami H."/>
            <person name="Takeda J."/>
            <person name="Takemoto K."/>
            <person name="Wada C."/>
            <person name="Yamamoto Y."/>
            <person name="Horiuchi T."/>
        </authorList>
    </citation>
    <scope>NUCLEOTIDE SEQUENCE [LARGE SCALE GENOMIC DNA]</scope>
    <source>
        <strain>K12 / W3110 / ATCC 27325 / DSM 5911</strain>
    </source>
</reference>
<reference key="5">
    <citation type="journal article" date="1997" name="Science">
        <title>The complete genome sequence of Escherichia coli K-12.</title>
        <authorList>
            <person name="Blattner F.R."/>
            <person name="Plunkett G. III"/>
            <person name="Bloch C.A."/>
            <person name="Perna N.T."/>
            <person name="Burland V."/>
            <person name="Riley M."/>
            <person name="Collado-Vides J."/>
            <person name="Glasner J.D."/>
            <person name="Rode C.K."/>
            <person name="Mayhew G.F."/>
            <person name="Gregor J."/>
            <person name="Davis N.W."/>
            <person name="Kirkpatrick H.A."/>
            <person name="Goeden M.A."/>
            <person name="Rose D.J."/>
            <person name="Mau B."/>
            <person name="Shao Y."/>
        </authorList>
    </citation>
    <scope>NUCLEOTIDE SEQUENCE [LARGE SCALE GENOMIC DNA]</scope>
    <source>
        <strain>K12 / MG1655 / ATCC 47076</strain>
    </source>
</reference>
<reference key="6">
    <citation type="journal article" date="2006" name="Mol. Syst. Biol.">
        <title>Highly accurate genome sequences of Escherichia coli K-12 strains MG1655 and W3110.</title>
        <authorList>
            <person name="Hayashi K."/>
            <person name="Morooka N."/>
            <person name="Yamamoto Y."/>
            <person name="Fujita K."/>
            <person name="Isono K."/>
            <person name="Choi S."/>
            <person name="Ohtsubo E."/>
            <person name="Baba T."/>
            <person name="Wanner B.L."/>
            <person name="Mori H."/>
            <person name="Horiuchi T."/>
        </authorList>
    </citation>
    <scope>NUCLEOTIDE SEQUENCE [LARGE SCALE GENOMIC DNA]</scope>
    <source>
        <strain>K12 / W3110 / ATCC 27325 / DSM 5911</strain>
    </source>
</reference>
<reference key="7">
    <citation type="journal article" date="1988" name="Mol. Biol. Evol.">
        <title>Fitness effects of a deletion mutation increasing transcription of the 6-phosphogluconate dehydrogenase gene in Escherichia coli.</title>
        <authorList>
            <person name="Miller R.D."/>
            <person name="Dykhuizen D.E."/>
            <person name="Hartl D.L."/>
        </authorList>
    </citation>
    <scope>NUCLEOTIDE SEQUENCE [GENOMIC DNA] OF 1-125</scope>
</reference>
<reference key="8">
    <citation type="journal article" date="1988" name="J. Bacteriol.">
        <title>Comparative nucleotide sequence analysis of growth-rate-regulated gnd alleles from natural isolates of Escherichia coli and from Salmonella typhimurium LT-2.</title>
        <authorList>
            <person name="Barcak G.J."/>
            <person name="Wolf R.E. Jr."/>
        </authorList>
    </citation>
    <scope>NUCLEOTIDE SEQUENCE [GENOMIC DNA] OF 1-125</scope>
</reference>
<reference key="9">
    <citation type="journal article" date="1993" name="J. Bacteriol.">
        <title>Identification, expression, and DNA sequence of the GDP-mannose biosynthesis genes encoded by the O7 rfb gene cluster of strain VW187 (Escherichia coli O7:K1).</title>
        <authorList>
            <person name="Marolda C.L."/>
            <person name="Valvano M.A."/>
        </authorList>
    </citation>
    <scope>NUCLEOTIDE SEQUENCE [GENOMIC DNA] OF 1-125</scope>
    <source>
        <strain>O7:K1 / VW187</strain>
    </source>
</reference>
<reference key="10">
    <citation type="journal article" date="1997" name="Electrophoresis">
        <title>Escherichia coli proteome analysis using the gene-protein database.</title>
        <authorList>
            <person name="VanBogelen R.A."/>
            <person name="Abshire K.Z."/>
            <person name="Moldover B."/>
            <person name="Olson E.R."/>
            <person name="Neidhardt F.C."/>
        </authorList>
    </citation>
    <scope>IDENTIFICATION BY 2D-GEL</scope>
</reference>
<reference key="11">
    <citation type="journal article" date="2010" name="J. Struct. Biol.">
        <title>Conformational changes associated with cofactor/substrate binding of 6-phosphogluconate dehydrogenase from Escherichia coli and Klebsiella pneumoniae: Implications for enzyme mechanism.</title>
        <authorList>
            <person name="Chen Y.Y."/>
            <person name="Ko T.P."/>
            <person name="Chen W.H."/>
            <person name="Lo L.P."/>
            <person name="Lin C.H."/>
            <person name="Wang A.H."/>
        </authorList>
    </citation>
    <scope>X-RAY CRYSTALLOGRAPHY (1.5 ANGSTROMS) IN COMPLEXES WITH NADP AND SUBSTRATE</scope>
    <scope>SUBUNIT</scope>
    <scope>CATALYTIC ACTIVITY</scope>
    <scope>FUNCTION</scope>
    <scope>ACTIVE SITE</scope>
    <scope>BIOPHYSICOCHEMICAL PROPERTIES</scope>
    <scope>PATHWAY</scope>
</reference>
<keyword id="KW-0002">3D-structure</keyword>
<keyword id="KW-0311">Gluconate utilization</keyword>
<keyword id="KW-0521">NADP</keyword>
<keyword id="KW-0560">Oxidoreductase</keyword>
<keyword id="KW-0570">Pentose shunt</keyword>
<keyword id="KW-1185">Reference proteome</keyword>
<feature type="chain" id="PRO_0000090037" description="6-phosphogluconate dehydrogenase, decarboxylating">
    <location>
        <begin position="1"/>
        <end position="468"/>
    </location>
</feature>
<feature type="active site" description="Proton acceptor" evidence="2">
    <location>
        <position position="183"/>
    </location>
</feature>
<feature type="active site" description="Proton donor" evidence="2">
    <location>
        <position position="190"/>
    </location>
</feature>
<feature type="binding site">
    <location>
        <begin position="10"/>
        <end position="15"/>
    </location>
    <ligand>
        <name>NADP(+)</name>
        <dbReference type="ChEBI" id="CHEBI:58349"/>
    </ligand>
</feature>
<feature type="binding site">
    <location>
        <begin position="33"/>
        <end position="35"/>
    </location>
    <ligand>
        <name>NADP(+)</name>
        <dbReference type="ChEBI" id="CHEBI:58349"/>
    </ligand>
</feature>
<feature type="binding site">
    <location>
        <begin position="74"/>
        <end position="76"/>
    </location>
    <ligand>
        <name>NADP(+)</name>
        <dbReference type="ChEBI" id="CHEBI:58349"/>
    </ligand>
</feature>
<feature type="binding site" evidence="1">
    <location>
        <position position="102"/>
    </location>
    <ligand>
        <name>NADP(+)</name>
        <dbReference type="ChEBI" id="CHEBI:58349"/>
    </ligand>
</feature>
<feature type="binding site" description="in other chain">
    <location>
        <position position="102"/>
    </location>
    <ligand>
        <name>substrate</name>
        <note>ligand shared between dimeric partners</note>
    </ligand>
</feature>
<feature type="binding site" description="in other chain">
    <location>
        <begin position="128"/>
        <end position="130"/>
    </location>
    <ligand>
        <name>substrate</name>
        <note>ligand shared between dimeric partners</note>
    </ligand>
</feature>
<feature type="binding site" description="in other chain" evidence="1">
    <location>
        <begin position="186"/>
        <end position="187"/>
    </location>
    <ligand>
        <name>substrate</name>
        <note>ligand shared between dimeric partners</note>
    </ligand>
</feature>
<feature type="binding site" description="in other chain" evidence="1">
    <location>
        <position position="191"/>
    </location>
    <ligand>
        <name>substrate</name>
        <note>ligand shared between dimeric partners</note>
    </ligand>
</feature>
<feature type="binding site" description="in other chain">
    <location>
        <position position="260"/>
    </location>
    <ligand>
        <name>substrate</name>
        <note>ligand shared between dimeric partners</note>
    </ligand>
</feature>
<feature type="binding site" description="in other chain">
    <location>
        <position position="287"/>
    </location>
    <ligand>
        <name>substrate</name>
        <note>ligand shared between dimeric partners</note>
    </ligand>
</feature>
<feature type="binding site">
    <location>
        <position position="445"/>
    </location>
    <ligand>
        <name>substrate</name>
        <note>ligand shared between dimeric partners</note>
    </ligand>
</feature>
<feature type="binding site">
    <location>
        <position position="451"/>
    </location>
    <ligand>
        <name>substrate</name>
        <note>ligand shared between dimeric partners</note>
    </ligand>
</feature>
<feature type="sequence variant" description="In strain: ECOR 70.">
    <original>S</original>
    <variation>L</variation>
    <location>
        <position position="2"/>
    </location>
</feature>
<feature type="sequence variant" description="In strain: ECOR 70.">
    <original>F</original>
    <variation>Y</variation>
    <location>
        <position position="32"/>
    </location>
</feature>
<feature type="sequence variant" description="In strain: O7:K1 / VW187.">
    <original>T</original>
    <variation>Q</variation>
    <location>
        <position position="39"/>
    </location>
</feature>
<feature type="sequence variant" description="In strain: ECOR 10.">
    <original>V</original>
    <variation>D</variation>
    <location>
        <position position="52"/>
    </location>
</feature>
<feature type="sequence variant" description="In strain: ECOR 10.">
    <original>Y</original>
    <variation>F</variation>
    <location>
        <position position="55"/>
    </location>
</feature>
<feature type="sequence variant" description="In strain: ECOR 65.">
    <original>N</original>
    <variation>K</variation>
    <location>
        <position position="102"/>
    </location>
</feature>
<feature type="sequence variant" description="In strain: ECOR 70.">
    <original>A</original>
    <variation>S</variation>
    <location>
        <position position="117"/>
    </location>
</feature>
<feature type="sequence variant" description="In strain: O7:K1 / VW187.">
    <original>IGT</original>
    <variation>YRY</variation>
    <location>
        <begin position="123"/>
        <end position="125"/>
    </location>
</feature>
<feature type="sequence variant" description="In strain: ECOR 10.">
    <original>V</original>
    <variation>F</variation>
    <location>
        <position position="170"/>
    </location>
</feature>
<feature type="sequence variant" description="In strain: ECOR 45.">
    <original>A</original>
    <variation>S</variation>
    <location>
        <position position="175"/>
    </location>
</feature>
<feature type="sequence variant" description="In strain: ECOR 68.">
    <original>N</original>
    <variation>S</variation>
    <location>
        <position position="209"/>
    </location>
</feature>
<feature type="sequence variant" description="In strain: ECOR 10 and ECOR 69.">
    <original>T</original>
    <variation>S</variation>
    <location>
        <position position="211"/>
    </location>
</feature>
<feature type="sequence variant" description="In strain: ECOR 67.">
    <original>A</original>
    <variation>T</variation>
    <location>
        <position position="216"/>
    </location>
</feature>
<feature type="sequence variant" description="In strain: ECOR 70.">
    <original>D</original>
    <variation>E</variation>
    <location>
        <position position="294"/>
    </location>
</feature>
<feature type="sequence variant" description="In strain: ECOR 68.">
    <original>A</original>
    <variation>G</variation>
    <location>
        <position position="308"/>
    </location>
</feature>
<feature type="sequence variant" description="In strain: ECOR 67.">
    <original>D</original>
    <variation>N</variation>
    <location>
        <position position="313"/>
    </location>
</feature>
<feature type="sequence variant" description="In strain: ECOR 70.">
    <original>A</original>
    <variation>G</variation>
    <location>
        <position position="315"/>
    </location>
</feature>
<feature type="sequence variant" description="In strain: ECOR 69.">
    <original>L</original>
    <variation>Q</variation>
    <location>
        <position position="325"/>
    </location>
</feature>
<feature type="sequence variant" description="In strain: ECOR 10.">
    <original>I</original>
    <variation>S</variation>
    <location>
        <position position="330"/>
    </location>
</feature>
<feature type="sequence variant" description="In strain: ECOR 10 and ECOR 69.">
    <original>D</original>
    <variation>A</variation>
    <location>
        <position position="350"/>
    </location>
</feature>
<feature type="sequence variant" description="In strain: ECOR 10.">
    <original>Q</original>
    <variation>R</variation>
    <location>
        <position position="369"/>
    </location>
</feature>
<feature type="sequence variant" description="In strain: ECOR 10, ECOR 65, ECOR 68, ECOR 69 and ECOR 70.">
    <original>S</original>
    <variation>A</variation>
    <location>
        <position position="422"/>
    </location>
</feature>
<feature type="sequence conflict" description="In Ref. 1; AAA23918." evidence="3" ref="1">
    <original>P</original>
    <variation>R</variation>
    <location>
        <position position="306"/>
    </location>
</feature>
<feature type="strand" evidence="5">
    <location>
        <begin position="4"/>
        <end position="9"/>
    </location>
</feature>
<feature type="helix" evidence="5">
    <location>
        <begin position="13"/>
        <end position="23"/>
    </location>
</feature>
<feature type="turn" evidence="5">
    <location>
        <begin position="24"/>
        <end position="26"/>
    </location>
</feature>
<feature type="strand" evidence="5">
    <location>
        <begin position="29"/>
        <end position="32"/>
    </location>
</feature>
<feature type="helix" evidence="5">
    <location>
        <begin position="36"/>
        <end position="45"/>
    </location>
</feature>
<feature type="strand" evidence="5">
    <location>
        <begin position="51"/>
        <end position="53"/>
    </location>
</feature>
<feature type="helix" evidence="5">
    <location>
        <begin position="57"/>
        <end position="62"/>
    </location>
</feature>
<feature type="strand" evidence="5">
    <location>
        <begin position="69"/>
        <end position="72"/>
    </location>
</feature>
<feature type="strand" evidence="5">
    <location>
        <begin position="76"/>
        <end position="78"/>
    </location>
</feature>
<feature type="helix" evidence="5">
    <location>
        <begin position="79"/>
        <end position="87"/>
    </location>
</feature>
<feature type="helix" evidence="5">
    <location>
        <begin position="88"/>
        <end position="90"/>
    </location>
</feature>
<feature type="strand" evidence="5">
    <location>
        <begin position="96"/>
        <end position="99"/>
    </location>
</feature>
<feature type="helix" evidence="5">
    <location>
        <begin position="105"/>
        <end position="117"/>
    </location>
</feature>
<feature type="strand" evidence="5">
    <location>
        <begin position="121"/>
        <end position="129"/>
    </location>
</feature>
<feature type="helix" evidence="5">
    <location>
        <begin position="130"/>
        <end position="136"/>
    </location>
</feature>
<feature type="strand" evidence="5">
    <location>
        <begin position="139"/>
        <end position="144"/>
    </location>
</feature>
<feature type="helix" evidence="5">
    <location>
        <begin position="146"/>
        <end position="159"/>
    </location>
</feature>
<feature type="strand" evidence="5">
    <location>
        <begin position="168"/>
        <end position="170"/>
    </location>
</feature>
<feature type="helix" evidence="5">
    <location>
        <begin position="178"/>
        <end position="208"/>
    </location>
</feature>
<feature type="helix" evidence="5">
    <location>
        <begin position="212"/>
        <end position="224"/>
    </location>
</feature>
<feature type="turn" evidence="5">
    <location>
        <begin position="225"/>
        <end position="227"/>
    </location>
</feature>
<feature type="helix" evidence="5">
    <location>
        <begin position="230"/>
        <end position="240"/>
    </location>
</feature>
<feature type="strand" evidence="5">
    <location>
        <begin position="246"/>
        <end position="248"/>
    </location>
</feature>
<feature type="helix" evidence="5">
    <location>
        <begin position="249"/>
        <end position="252"/>
    </location>
</feature>
<feature type="helix" evidence="5">
    <location>
        <begin position="265"/>
        <end position="273"/>
    </location>
</feature>
<feature type="helix" evidence="5">
    <location>
        <begin position="278"/>
        <end position="290"/>
    </location>
</feature>
<feature type="helix" evidence="5">
    <location>
        <begin position="293"/>
        <end position="300"/>
    </location>
</feature>
<feature type="helix" evidence="5">
    <location>
        <begin position="314"/>
        <end position="347"/>
    </location>
</feature>
<feature type="helix" evidence="5">
    <location>
        <begin position="353"/>
        <end position="359"/>
    </location>
</feature>
<feature type="strand" evidence="5">
    <location>
        <begin position="361"/>
        <end position="364"/>
    </location>
</feature>
<feature type="helix" evidence="5">
    <location>
        <begin position="370"/>
        <end position="380"/>
    </location>
</feature>
<feature type="helix" evidence="5">
    <location>
        <begin position="387"/>
        <end position="389"/>
    </location>
</feature>
<feature type="helix" evidence="5">
    <location>
        <begin position="391"/>
        <end position="414"/>
    </location>
</feature>
<feature type="helix" evidence="5">
    <location>
        <begin position="419"/>
        <end position="431"/>
    </location>
</feature>
<feature type="helix" evidence="5">
    <location>
        <begin position="438"/>
        <end position="449"/>
    </location>
</feature>
<feature type="strand" evidence="5">
    <location>
        <begin position="455"/>
        <end position="458"/>
    </location>
</feature>
<feature type="strand" evidence="6">
    <location>
        <begin position="460"/>
        <end position="462"/>
    </location>
</feature>
<proteinExistence type="evidence at protein level"/>
<sequence length="468" mass="51481">MSKQQIGVVGMAVMGRNLALNIESRGYTVSIFNRSREKTEEVIAENPGKKLVPYYTVKEFVESLETPRRILLMVKAGAGTDAAIDSLKPYLDKGDIIIDGGNTFFQDTIRRNRELSAEGFNFIGTGVSGGEEGALKGPSIMPGGQKEAYELVAPILTKIAAVAEDGEPCVTYIGADGAGHYVKMVHNGIEYGDMQLIAEAYSLLKGGLNLTNEELAQTFTEWNNGELSSYLIDITKDIFTKKDEDGNYLVDVILDEAANKGTGKWTSQSALDLGEPLSLITESVFARYISSLKDQRVAASKVLSGPQAQPAGDKAEFIEKVRRALYLGKIVSYAQGFSQLRAASEEYNWDLNYGEIAKIFRAGCIIRAQFLQKITDAYAENPQIANLLLAPYFKQIADDYQQALRDVVAYAVQNGIPVPTFSAAVAYYDSYRAAVLPANLIQAQRDYFGAHTYKRIDKEGVFHTEWLD</sequence>